<evidence type="ECO:0000250" key="1"/>
<evidence type="ECO:0000269" key="2">
    <source>
    </source>
</evidence>
<comment type="function">
    <text evidence="1">Component of the pyruvate dehydrogenase (PDH) complex, that catalyzes the overall conversion of pyruvate to acetyl-CoA and CO(2). AceE has reductase activity with pyruvate but does not react with 2-oxoglutarate (By similarity).</text>
</comment>
<comment type="catalytic activity">
    <reaction>
        <text>N(6)-[(R)-lipoyl]-L-lysyl-[protein] + pyruvate + H(+) = N(6)-[(R)-S(8)-acetyldihydrolipoyl]-L-lysyl-[protein] + CO2</text>
        <dbReference type="Rhea" id="RHEA:19189"/>
        <dbReference type="Rhea" id="RHEA-COMP:10474"/>
        <dbReference type="Rhea" id="RHEA-COMP:10478"/>
        <dbReference type="ChEBI" id="CHEBI:15361"/>
        <dbReference type="ChEBI" id="CHEBI:15378"/>
        <dbReference type="ChEBI" id="CHEBI:16526"/>
        <dbReference type="ChEBI" id="CHEBI:83099"/>
        <dbReference type="ChEBI" id="CHEBI:83111"/>
        <dbReference type="EC" id="1.2.4.1"/>
    </reaction>
</comment>
<comment type="cofactor">
    <cofactor evidence="1">
        <name>Mg(2+)</name>
        <dbReference type="ChEBI" id="CHEBI:18420"/>
    </cofactor>
</comment>
<comment type="cofactor">
    <cofactor evidence="1">
        <name>thiamine diphosphate</name>
        <dbReference type="ChEBI" id="CHEBI:58937"/>
    </cofactor>
</comment>
<comment type="subunit">
    <text evidence="1">Homodimer. Part of the PDH complex, consisting of multiple copies of AceE (E1), DlaT (E2) and Lpd (E3).</text>
</comment>
<proteinExistence type="evidence at protein level"/>
<accession>A0R0B0</accession>
<accession>I7GD92</accession>
<keyword id="KW-1017">Isopeptide bond</keyword>
<keyword id="KW-0460">Magnesium</keyword>
<keyword id="KW-0560">Oxidoreductase</keyword>
<keyword id="KW-0670">Pyruvate</keyword>
<keyword id="KW-1185">Reference proteome</keyword>
<keyword id="KW-0786">Thiamine pyrophosphate</keyword>
<keyword id="KW-0832">Ubl conjugation</keyword>
<name>ODP1_MYCS2</name>
<protein>
    <recommendedName>
        <fullName>Pyruvate dehydrogenase E1 component</fullName>
        <shortName>PDH E1 component</shortName>
        <ecNumber>1.2.4.1</ecNumber>
    </recommendedName>
</protein>
<organism>
    <name type="scientific">Mycolicibacterium smegmatis (strain ATCC 700084 / mc(2)155)</name>
    <name type="common">Mycobacterium smegmatis</name>
    <dbReference type="NCBI Taxonomy" id="246196"/>
    <lineage>
        <taxon>Bacteria</taxon>
        <taxon>Bacillati</taxon>
        <taxon>Actinomycetota</taxon>
        <taxon>Actinomycetes</taxon>
        <taxon>Mycobacteriales</taxon>
        <taxon>Mycobacteriaceae</taxon>
        <taxon>Mycolicibacterium</taxon>
    </lineage>
</organism>
<sequence length="929" mass="103077">MTTEFVRQDLAQNSSTAAEPDRVRVIREGVASYLPDIDTEETAEWLESFDELLERSGPARARYLMLRLLERAGEQRVAIPALTSTDYVNTIPTELEPWFPGDEDVERRYRAWIRWNAAIMVHRAQRPGVGVGGHISTYASSATLYEVGFNHFFRGKSHPGGGDHVFIQGHASPGIYARAFLEGRLTTDQLDGFRQEHSHSGGGLPSYPHPRLMPDFWEFPTVSMGLGPMNAIYQARFNHYLHDRGIKDTSDQHVWAFLGDGEMDEPESRGLIQVAANEALDNLTFVINCNLQRLDGPVRGNGKIIQELESFFRGAGWNVIKVVWGREWDVLLHADRDGALVNLMNSTPDGDYQTYKANDGAYVRDHFFGRDPRTKALVADMSDQEIWNLKRGGHDYRKVYAAYRAAMEHKGQPTVILAKTIKGYTLGQHFEGRNATHQMKKLALEDLKNFRDVTRVPVSDAQLEEDPYLPPYYHPGPEAPEIRYLLERRRALGGFVPSRRTKSKPLALPGSDTYKALKKGSGSQAVATTMATVRTFKELLRDKNIGPRIVPIIPDEARTFGMDSWFPSLKIYNRNGQLYTSVDSELMLAYKESEVGQILHEGINEAGSTSSFTAVGTSYSTHDEPMIPIYIFYSMFGFQRTGDGLWAAADQMARGFVLGATAGRTTLTGEGLQHADGHSLLLASTNPAAVTYDPAFAYEIAHIIESGLQRMYGEDPENVFFYLTIYNEPYQQPAEPENLDVEALLKGLYLYRPAPEKRAKSAQILASGVAMPEALRAADLLASDWDVAADVWSVTSWGELNREGVAIEKHRLRHPDEPAGTPHVTSALADAAGPVIAVSDWMRAVPEQIRPWVPGTYVTLGTDGFGFSDTRPAARRYFNTDAESVVVAVLQGLARDGEIDASVAAQAAEQYRIDDVSAAGVSYADTGSA</sequence>
<feature type="chain" id="PRO_0000396809" description="Pyruvate dehydrogenase E1 component">
    <location>
        <begin position="1"/>
        <end position="929"/>
    </location>
</feature>
<feature type="cross-link" description="Isoglutamyl lysine isopeptide (Lys-Gln) (interchain with Q-Cter in protein Pup)" evidence="2">
    <location>
        <position position="375"/>
    </location>
</feature>
<reference key="1">
    <citation type="submission" date="2006-10" db="EMBL/GenBank/DDBJ databases">
        <authorList>
            <person name="Fleischmann R.D."/>
            <person name="Dodson R.J."/>
            <person name="Haft D.H."/>
            <person name="Merkel J.S."/>
            <person name="Nelson W.C."/>
            <person name="Fraser C.M."/>
        </authorList>
    </citation>
    <scope>NUCLEOTIDE SEQUENCE [LARGE SCALE GENOMIC DNA]</scope>
    <source>
        <strain>ATCC 700084 / mc(2)155</strain>
    </source>
</reference>
<reference key="2">
    <citation type="journal article" date="2007" name="Genome Biol.">
        <title>Interrupted coding sequences in Mycobacterium smegmatis: authentic mutations or sequencing errors?</title>
        <authorList>
            <person name="Deshayes C."/>
            <person name="Perrodou E."/>
            <person name="Gallien S."/>
            <person name="Euphrasie D."/>
            <person name="Schaeffer C."/>
            <person name="Van-Dorsselaer A."/>
            <person name="Poch O."/>
            <person name="Lecompte O."/>
            <person name="Reyrat J.-M."/>
        </authorList>
    </citation>
    <scope>NUCLEOTIDE SEQUENCE [LARGE SCALE GENOMIC DNA]</scope>
    <source>
        <strain>ATCC 700084 / mc(2)155</strain>
    </source>
</reference>
<reference key="3">
    <citation type="journal article" date="2009" name="Genome Res.">
        <title>Ortho-proteogenomics: multiple proteomes investigation through orthology and a new MS-based protocol.</title>
        <authorList>
            <person name="Gallien S."/>
            <person name="Perrodou E."/>
            <person name="Carapito C."/>
            <person name="Deshayes C."/>
            <person name="Reyrat J.-M."/>
            <person name="Van Dorsselaer A."/>
            <person name="Poch O."/>
            <person name="Schaeffer C."/>
            <person name="Lecompte O."/>
        </authorList>
    </citation>
    <scope>NUCLEOTIDE SEQUENCE [LARGE SCALE GENOMIC DNA]</scope>
    <source>
        <strain>ATCC 700084 / mc(2)155</strain>
    </source>
</reference>
<reference key="4">
    <citation type="journal article" date="2010" name="Mol. Biosyst.">
        <title>Expansion of the mycobacterial 'PUPylome'.</title>
        <authorList>
            <person name="Watrous J."/>
            <person name="Burns K."/>
            <person name="Liu W.T."/>
            <person name="Patel A."/>
            <person name="Hook V."/>
            <person name="Bafna V."/>
            <person name="Barry C.E. III"/>
            <person name="Bark S."/>
            <person name="Dorrestein P.C."/>
        </authorList>
    </citation>
    <scope>PUPYLATION AT LYS-375</scope>
    <scope>IDENTIFICATION BY MASS SPECTROMETRY</scope>
</reference>
<dbReference type="EC" id="1.2.4.1"/>
<dbReference type="EMBL" id="CP000480">
    <property type="protein sequence ID" value="ABK72760.1"/>
    <property type="molecule type" value="Genomic_DNA"/>
</dbReference>
<dbReference type="EMBL" id="CP001663">
    <property type="protein sequence ID" value="AFP40679.1"/>
    <property type="molecule type" value="Genomic_DNA"/>
</dbReference>
<dbReference type="RefSeq" id="WP_011729733.1">
    <property type="nucleotide sequence ID" value="NZ_SIJM01000003.1"/>
</dbReference>
<dbReference type="RefSeq" id="YP_888598.1">
    <property type="nucleotide sequence ID" value="NC_008596.1"/>
</dbReference>
<dbReference type="SMR" id="A0R0B0"/>
<dbReference type="STRING" id="246196.MSMEG_4323"/>
<dbReference type="PaxDb" id="246196-MSMEI_4223"/>
<dbReference type="GeneID" id="93459042"/>
<dbReference type="KEGG" id="msb:LJ00_21425"/>
<dbReference type="KEGG" id="msg:MSMEI_4223"/>
<dbReference type="KEGG" id="msm:MSMEG_4323"/>
<dbReference type="PATRIC" id="fig|246196.19.peg.4241"/>
<dbReference type="eggNOG" id="COG2609">
    <property type="taxonomic scope" value="Bacteria"/>
</dbReference>
<dbReference type="OrthoDB" id="9759664at2"/>
<dbReference type="Proteomes" id="UP000000757">
    <property type="component" value="Chromosome"/>
</dbReference>
<dbReference type="Proteomes" id="UP000006158">
    <property type="component" value="Chromosome"/>
</dbReference>
<dbReference type="GO" id="GO:0000287">
    <property type="term" value="F:magnesium ion binding"/>
    <property type="evidence" value="ECO:0007669"/>
    <property type="project" value="UniProtKB-ARBA"/>
</dbReference>
<dbReference type="GO" id="GO:0004739">
    <property type="term" value="F:pyruvate dehydrogenase (acetyl-transferring) activity"/>
    <property type="evidence" value="ECO:0007669"/>
    <property type="project" value="UniProtKB-EC"/>
</dbReference>
<dbReference type="CDD" id="cd02017">
    <property type="entry name" value="TPP_E1_EcPDC_like"/>
    <property type="match status" value="1"/>
</dbReference>
<dbReference type="FunFam" id="3.40.50.970:FF:000011">
    <property type="entry name" value="Pyruvate dehydrogenase E1 component"/>
    <property type="match status" value="1"/>
</dbReference>
<dbReference type="Gene3D" id="3.40.50.920">
    <property type="match status" value="1"/>
</dbReference>
<dbReference type="Gene3D" id="3.40.50.970">
    <property type="match status" value="2"/>
</dbReference>
<dbReference type="InterPro" id="IPR035807">
    <property type="entry name" value="PDC_E1_N"/>
</dbReference>
<dbReference type="InterPro" id="IPR051157">
    <property type="entry name" value="PDH/Transketolase"/>
</dbReference>
<dbReference type="InterPro" id="IPR004660">
    <property type="entry name" value="PDH_E1"/>
</dbReference>
<dbReference type="InterPro" id="IPR041621">
    <property type="entry name" value="PDH_E1_M"/>
</dbReference>
<dbReference type="InterPro" id="IPR029061">
    <property type="entry name" value="THDP-binding"/>
</dbReference>
<dbReference type="InterPro" id="IPR009014">
    <property type="entry name" value="Transketo_C/PFOR_II"/>
</dbReference>
<dbReference type="InterPro" id="IPR055152">
    <property type="entry name" value="Transketolase-like_C_2"/>
</dbReference>
<dbReference type="InterPro" id="IPR005474">
    <property type="entry name" value="Transketolase_N"/>
</dbReference>
<dbReference type="NCBIfam" id="TIGR00759">
    <property type="entry name" value="aceE"/>
    <property type="match status" value="1"/>
</dbReference>
<dbReference type="PANTHER" id="PTHR43825">
    <property type="entry name" value="PYRUVATE DEHYDROGENASE E1 COMPONENT"/>
    <property type="match status" value="1"/>
</dbReference>
<dbReference type="PANTHER" id="PTHR43825:SF3">
    <property type="entry name" value="PYRUVATE DEHYDROGENASE E1 COMPONENT"/>
    <property type="match status" value="1"/>
</dbReference>
<dbReference type="Pfam" id="PF17831">
    <property type="entry name" value="PDH_E1_M"/>
    <property type="match status" value="1"/>
</dbReference>
<dbReference type="Pfam" id="PF22613">
    <property type="entry name" value="Transketolase_C_1"/>
    <property type="match status" value="1"/>
</dbReference>
<dbReference type="Pfam" id="PF00456">
    <property type="entry name" value="Transketolase_N"/>
    <property type="match status" value="1"/>
</dbReference>
<dbReference type="PIRSF" id="PIRSF000156">
    <property type="entry name" value="Pyruvate_dh_E1"/>
    <property type="match status" value="1"/>
</dbReference>
<dbReference type="SUPFAM" id="SSF52518">
    <property type="entry name" value="Thiamin diphosphate-binding fold (THDP-binding)"/>
    <property type="match status" value="2"/>
</dbReference>
<dbReference type="SUPFAM" id="SSF52922">
    <property type="entry name" value="TK C-terminal domain-like"/>
    <property type="match status" value="1"/>
</dbReference>
<gene>
    <name type="primary">aceE</name>
    <name type="ordered locus">MSMEG_4323</name>
    <name type="ordered locus">MSMEI_4223</name>
</gene>